<name>RSMH_BRUSI</name>
<keyword id="KW-0963">Cytoplasm</keyword>
<keyword id="KW-0489">Methyltransferase</keyword>
<keyword id="KW-0698">rRNA processing</keyword>
<keyword id="KW-0949">S-adenosyl-L-methionine</keyword>
<keyword id="KW-0808">Transferase</keyword>
<feature type="chain" id="PRO_0000386765" description="Ribosomal RNA small subunit methyltransferase H">
    <location>
        <begin position="1"/>
        <end position="346"/>
    </location>
</feature>
<feature type="region of interest" description="Disordered" evidence="2">
    <location>
        <begin position="270"/>
        <end position="346"/>
    </location>
</feature>
<feature type="binding site" evidence="1">
    <location>
        <begin position="46"/>
        <end position="48"/>
    </location>
    <ligand>
        <name>S-adenosyl-L-methionine</name>
        <dbReference type="ChEBI" id="CHEBI:59789"/>
    </ligand>
</feature>
<feature type="binding site" evidence="1">
    <location>
        <position position="63"/>
    </location>
    <ligand>
        <name>S-adenosyl-L-methionine</name>
        <dbReference type="ChEBI" id="CHEBI:59789"/>
    </ligand>
</feature>
<feature type="binding site" evidence="1">
    <location>
        <position position="90"/>
    </location>
    <ligand>
        <name>S-adenosyl-L-methionine</name>
        <dbReference type="ChEBI" id="CHEBI:59789"/>
    </ligand>
</feature>
<feature type="binding site" evidence="1">
    <location>
        <position position="113"/>
    </location>
    <ligand>
        <name>S-adenosyl-L-methionine</name>
        <dbReference type="ChEBI" id="CHEBI:59789"/>
    </ligand>
</feature>
<feature type="binding site" evidence="1">
    <location>
        <position position="120"/>
    </location>
    <ligand>
        <name>S-adenosyl-L-methionine</name>
        <dbReference type="ChEBI" id="CHEBI:59789"/>
    </ligand>
</feature>
<reference key="1">
    <citation type="submission" date="2007-12" db="EMBL/GenBank/DDBJ databases">
        <title>Brucella suis ATCC 23445 whole genome shotgun sequencing project.</title>
        <authorList>
            <person name="Setubal J.C."/>
            <person name="Bowns C."/>
            <person name="Boyle S."/>
            <person name="Crasta O.R."/>
            <person name="Czar M.J."/>
            <person name="Dharmanolla C."/>
            <person name="Gillespie J.J."/>
            <person name="Kenyon R.W."/>
            <person name="Lu J."/>
            <person name="Mane S."/>
            <person name="Mohapatra S."/>
            <person name="Nagrani S."/>
            <person name="Purkayastha A."/>
            <person name="Rajasimha H.K."/>
            <person name="Shallom J.M."/>
            <person name="Shallom S."/>
            <person name="Shukla M."/>
            <person name="Snyder E.E."/>
            <person name="Sobral B.W."/>
            <person name="Wattam A.R."/>
            <person name="Will R."/>
            <person name="Williams K."/>
            <person name="Yoo H."/>
            <person name="Bruce D."/>
            <person name="Detter C."/>
            <person name="Munk C."/>
            <person name="Brettin T.S."/>
        </authorList>
    </citation>
    <scope>NUCLEOTIDE SEQUENCE [LARGE SCALE GENOMIC DNA]</scope>
    <source>
        <strain>ATCC 23445 / NCTC 10510</strain>
    </source>
</reference>
<evidence type="ECO:0000255" key="1">
    <source>
        <dbReference type="HAMAP-Rule" id="MF_01007"/>
    </source>
</evidence>
<evidence type="ECO:0000256" key="2">
    <source>
        <dbReference type="SAM" id="MobiDB-lite"/>
    </source>
</evidence>
<organism>
    <name type="scientific">Brucella suis (strain ATCC 23445 / NCTC 10510)</name>
    <dbReference type="NCBI Taxonomy" id="470137"/>
    <lineage>
        <taxon>Bacteria</taxon>
        <taxon>Pseudomonadati</taxon>
        <taxon>Pseudomonadota</taxon>
        <taxon>Alphaproteobacteria</taxon>
        <taxon>Hyphomicrobiales</taxon>
        <taxon>Brucellaceae</taxon>
        <taxon>Brucella/Ochrobactrum group</taxon>
        <taxon>Brucella</taxon>
    </lineage>
</organism>
<proteinExistence type="inferred from homology"/>
<gene>
    <name evidence="1" type="primary">rsmH</name>
    <name type="synonym">mraW</name>
    <name type="ordered locus">BSUIS_A1491</name>
</gene>
<accession>B0CHM8</accession>
<comment type="function">
    <text evidence="1">Specifically methylates the N4 position of cytidine in position 1402 (C1402) of 16S rRNA.</text>
</comment>
<comment type="catalytic activity">
    <reaction evidence="1">
        <text>cytidine(1402) in 16S rRNA + S-adenosyl-L-methionine = N(4)-methylcytidine(1402) in 16S rRNA + S-adenosyl-L-homocysteine + H(+)</text>
        <dbReference type="Rhea" id="RHEA:42928"/>
        <dbReference type="Rhea" id="RHEA-COMP:10286"/>
        <dbReference type="Rhea" id="RHEA-COMP:10287"/>
        <dbReference type="ChEBI" id="CHEBI:15378"/>
        <dbReference type="ChEBI" id="CHEBI:57856"/>
        <dbReference type="ChEBI" id="CHEBI:59789"/>
        <dbReference type="ChEBI" id="CHEBI:74506"/>
        <dbReference type="ChEBI" id="CHEBI:82748"/>
        <dbReference type="EC" id="2.1.1.199"/>
    </reaction>
</comment>
<comment type="subcellular location">
    <subcellularLocation>
        <location evidence="1">Cytoplasm</location>
    </subcellularLocation>
</comment>
<comment type="similarity">
    <text evidence="1">Belongs to the methyltransferase superfamily. RsmH family.</text>
</comment>
<dbReference type="EC" id="2.1.1.199" evidence="1"/>
<dbReference type="EMBL" id="CP000911">
    <property type="protein sequence ID" value="ABY38529.1"/>
    <property type="molecule type" value="Genomic_DNA"/>
</dbReference>
<dbReference type="SMR" id="B0CHM8"/>
<dbReference type="KEGG" id="bmt:BSUIS_A1491"/>
<dbReference type="HOGENOM" id="CLU_038422_1_1_5"/>
<dbReference type="Proteomes" id="UP000008545">
    <property type="component" value="Chromosome I"/>
</dbReference>
<dbReference type="GO" id="GO:0005737">
    <property type="term" value="C:cytoplasm"/>
    <property type="evidence" value="ECO:0007669"/>
    <property type="project" value="UniProtKB-SubCell"/>
</dbReference>
<dbReference type="GO" id="GO:0071424">
    <property type="term" value="F:rRNA (cytosine-N4-)-methyltransferase activity"/>
    <property type="evidence" value="ECO:0007669"/>
    <property type="project" value="UniProtKB-UniRule"/>
</dbReference>
<dbReference type="GO" id="GO:0070475">
    <property type="term" value="P:rRNA base methylation"/>
    <property type="evidence" value="ECO:0007669"/>
    <property type="project" value="UniProtKB-UniRule"/>
</dbReference>
<dbReference type="CDD" id="cd02440">
    <property type="entry name" value="AdoMet_MTases"/>
    <property type="match status" value="1"/>
</dbReference>
<dbReference type="Gene3D" id="1.10.150.170">
    <property type="entry name" value="Putative methyltransferase TM0872, insert domain"/>
    <property type="match status" value="1"/>
</dbReference>
<dbReference type="Gene3D" id="3.40.50.150">
    <property type="entry name" value="Vaccinia Virus protein VP39"/>
    <property type="match status" value="1"/>
</dbReference>
<dbReference type="HAMAP" id="MF_01007">
    <property type="entry name" value="16SrRNA_methyltr_H"/>
    <property type="match status" value="1"/>
</dbReference>
<dbReference type="InterPro" id="IPR002903">
    <property type="entry name" value="RsmH"/>
</dbReference>
<dbReference type="InterPro" id="IPR023397">
    <property type="entry name" value="SAM-dep_MeTrfase_MraW_recog"/>
</dbReference>
<dbReference type="InterPro" id="IPR029063">
    <property type="entry name" value="SAM-dependent_MTases_sf"/>
</dbReference>
<dbReference type="NCBIfam" id="TIGR00006">
    <property type="entry name" value="16S rRNA (cytosine(1402)-N(4))-methyltransferase RsmH"/>
    <property type="match status" value="1"/>
</dbReference>
<dbReference type="PANTHER" id="PTHR11265:SF0">
    <property type="entry name" value="12S RRNA N4-METHYLCYTIDINE METHYLTRANSFERASE"/>
    <property type="match status" value="1"/>
</dbReference>
<dbReference type="PANTHER" id="PTHR11265">
    <property type="entry name" value="S-ADENOSYL-METHYLTRANSFERASE MRAW"/>
    <property type="match status" value="1"/>
</dbReference>
<dbReference type="Pfam" id="PF01795">
    <property type="entry name" value="Methyltransf_5"/>
    <property type="match status" value="1"/>
</dbReference>
<dbReference type="PIRSF" id="PIRSF004486">
    <property type="entry name" value="MraW"/>
    <property type="match status" value="1"/>
</dbReference>
<dbReference type="SUPFAM" id="SSF81799">
    <property type="entry name" value="Putative methyltransferase TM0872, insert domain"/>
    <property type="match status" value="1"/>
</dbReference>
<dbReference type="SUPFAM" id="SSF53335">
    <property type="entry name" value="S-adenosyl-L-methionine-dependent methyltransferases"/>
    <property type="match status" value="1"/>
</dbReference>
<protein>
    <recommendedName>
        <fullName evidence="1">Ribosomal RNA small subunit methyltransferase H</fullName>
        <ecNumber evidence="1">2.1.1.199</ecNumber>
    </recommendedName>
    <alternativeName>
        <fullName evidence="1">16S rRNA m(4)C1402 methyltransferase</fullName>
    </alternativeName>
    <alternativeName>
        <fullName evidence="1">rRNA (cytosine-N(4)-)-methyltransferase RsmH</fullName>
    </alternativeName>
</protein>
<sequence length="346" mass="37403">MASLGGDNSQAEGAEVRHVPVLIAEVIDALKPAPGAVIVDGTFGAGGYTRRILETGADVIAIDRDPTAIEAGRAMEKEFPGRLNLVESRFSALDEAVARMSGAGKKVDGVVLDIGVSSMQIDEAERGFSFQKDGPLDMRMSSGGPSAADAVNRLKTGDLARIFNFLGEERHAGRIARMIEKRRAAKPFTRTLDLANAIETLVGRNPKDRIHPATRVFQALRVYVNDELGELARALLAAERILKPGGRLVVVTFHSLEDRMVKRFFADRAGGSAGSRHMPETHMRLPSFTPAVKGAVGPTPEEEERNPRARSAKLRAGIRTENPPLEDDLSLFGLPKLPETNELARS</sequence>